<feature type="chain" id="PRO_0000409523" description="Wee1-like protein kinase 1-B">
    <location>
        <begin position="1"/>
        <end position="595"/>
    </location>
</feature>
<feature type="domain" description="Protein kinase" evidence="3">
    <location>
        <begin position="248"/>
        <end position="518"/>
    </location>
</feature>
<feature type="region of interest" description="Disordered" evidence="5">
    <location>
        <begin position="1"/>
        <end position="127"/>
    </location>
</feature>
<feature type="coiled-coil region" evidence="2">
    <location>
        <begin position="526"/>
        <end position="563"/>
    </location>
</feature>
<feature type="compositionally biased region" description="Polar residues" evidence="5">
    <location>
        <begin position="1"/>
        <end position="17"/>
    </location>
</feature>
<feature type="compositionally biased region" description="Pro residues" evidence="5">
    <location>
        <begin position="111"/>
        <end position="122"/>
    </location>
</feature>
<feature type="active site" description="Proton acceptor" evidence="3 4">
    <location>
        <position position="375"/>
    </location>
</feature>
<feature type="binding site" evidence="3">
    <location>
        <begin position="254"/>
        <end position="262"/>
    </location>
    <ligand>
        <name>ATP</name>
        <dbReference type="ChEBI" id="CHEBI:30616"/>
    </ligand>
</feature>
<feature type="binding site" evidence="3">
    <location>
        <position position="277"/>
    </location>
    <ligand>
        <name>ATP</name>
        <dbReference type="ChEBI" id="CHEBI:30616"/>
    </ligand>
</feature>
<feature type="binding site" evidence="1">
    <location>
        <position position="380"/>
    </location>
    <ligand>
        <name>Mg(2+)</name>
        <dbReference type="ChEBI" id="CHEBI:18420"/>
    </ligand>
</feature>
<feature type="binding site" evidence="1">
    <location>
        <position position="412"/>
    </location>
    <ligand>
        <name>Mg(2+)</name>
        <dbReference type="ChEBI" id="CHEBI:18420"/>
    </ligand>
</feature>
<feature type="modified residue" description="Phosphothreonine; by cdk1" evidence="7">
    <location>
        <position position="186"/>
    </location>
</feature>
<feature type="mutagenesis site" description="Impairs without abolishing ability to phosphorylate cdk1." evidence="7">
    <original>NIN</original>
    <variation>AAA</variation>
    <location>
        <begin position="181"/>
        <end position="183"/>
    </location>
</feature>
<feature type="mutagenesis site" description="Abolishes kinase activity inhibition during M-phase. Does not affect ability to phosphorylate cdk1." evidence="7">
    <original>T</original>
    <variation>A</variation>
    <location>
        <position position="186"/>
    </location>
</feature>
<feature type="sequence conflict" description="In Ref. 2; AAH82404." evidence="8" ref="2">
    <original>T</original>
    <variation>S</variation>
    <location>
        <position position="67"/>
    </location>
</feature>
<feature type="sequence conflict" description="In Ref. 2; AAH82404." evidence="8" ref="2">
    <original>H</original>
    <variation>Y</variation>
    <location>
        <position position="367"/>
    </location>
</feature>
<protein>
    <recommendedName>
        <fullName>Wee1-like protein kinase 1-B</fullName>
        <ecNumber>2.7.10.2</ecNumber>
    </recommendedName>
    <alternativeName>
        <fullName>Zygotic wee1-like protein kinase 1B</fullName>
        <shortName>Xe-Wee1B</shortName>
        <shortName>XeWee1B</shortName>
    </alternativeName>
</protein>
<sequence>MNVQPRNMNVQPRNMNVQPVRHKLFFSDTDEEEEDGHSTGEDSAFQESDSPVSRQREKQEGKPPGGTWEELEEEEGFGSSPIKSPGDFFMSDSPSYRQLAPASPTRSPQGPTSPIPECPGTPPHKTFRKLRLFDTPHTPKSLLSKARGIGSSALRFRGGTLFREAEKAPKPEFVYSTPQVNINPFTPDSLEIQSSAGLCRGRKRALLNDSCGEDMEGSDCELEDEDIRPAKRIPITESNMKSRYATEFHELEKIGSGEFGSVFKCVKRLDGCIYAIKRSKKPLAGSVDEQNALREVYAHAVLGQHPHVVRYYSAWAEDDHMLIQNEYCNGGSLSDVISENYRTMQYFTEPELKDLLLQVARGLKYIHSMSLVHMDIKPSNIFISRTTLPNTAVEEADDEECGSGKVIYKIGDLGHVTRVSSPQVEEGDSRFLANEVLQENYTHLAKADIFALALTVWSAAGAEPFPTNGDQWHEIRQGKLPRVPQLLSQEFVDLIKLMISPDPEKRPSSVALVKHSVLLSASRKSAEQLRIELDAEKFKNALLQKELKKAQIAKAAAEERAHFPDRIATRSTTQNNRTTRLIGKKMNRSVSLTIY</sequence>
<name>WEE1B_XENLA</name>
<gene>
    <name type="primary">wee1-b</name>
</gene>
<evidence type="ECO:0000250" key="1"/>
<evidence type="ECO:0000255" key="2"/>
<evidence type="ECO:0000255" key="3">
    <source>
        <dbReference type="PROSITE-ProRule" id="PRU00159"/>
    </source>
</evidence>
<evidence type="ECO:0000255" key="4">
    <source>
        <dbReference type="PROSITE-ProRule" id="PRU10027"/>
    </source>
</evidence>
<evidence type="ECO:0000256" key="5">
    <source>
        <dbReference type="SAM" id="MobiDB-lite"/>
    </source>
</evidence>
<evidence type="ECO:0000269" key="6">
    <source>
    </source>
</evidence>
<evidence type="ECO:0000269" key="7">
    <source>
    </source>
</evidence>
<evidence type="ECO:0000305" key="8"/>
<organism>
    <name type="scientific">Xenopus laevis</name>
    <name type="common">African clawed frog</name>
    <dbReference type="NCBI Taxonomy" id="8355"/>
    <lineage>
        <taxon>Eukaryota</taxon>
        <taxon>Metazoa</taxon>
        <taxon>Chordata</taxon>
        <taxon>Craniata</taxon>
        <taxon>Vertebrata</taxon>
        <taxon>Euteleostomi</taxon>
        <taxon>Amphibia</taxon>
        <taxon>Batrachia</taxon>
        <taxon>Anura</taxon>
        <taxon>Pipoidea</taxon>
        <taxon>Pipidae</taxon>
        <taxon>Xenopodinae</taxon>
        <taxon>Xenopus</taxon>
        <taxon>Xenopus</taxon>
    </lineage>
</organism>
<dbReference type="EC" id="2.7.10.2"/>
<dbReference type="EMBL" id="AB071983">
    <property type="protein sequence ID" value="BAB86797.1"/>
    <property type="molecule type" value="mRNA"/>
</dbReference>
<dbReference type="EMBL" id="BC082404">
    <property type="protein sequence ID" value="AAH82404.1"/>
    <property type="status" value="ALT_INIT"/>
    <property type="molecule type" value="mRNA"/>
</dbReference>
<dbReference type="RefSeq" id="NP_001084186.1">
    <property type="nucleotide sequence ID" value="NM_001090717.1"/>
</dbReference>
<dbReference type="SMR" id="Q8QGV2"/>
<dbReference type="BioGRID" id="100680">
    <property type="interactions" value="1"/>
</dbReference>
<dbReference type="DIP" id="DIP-60878N"/>
<dbReference type="ELM" id="Q8QGV2"/>
<dbReference type="IntAct" id="Q8QGV2">
    <property type="interactions" value="3"/>
</dbReference>
<dbReference type="iPTMnet" id="Q8QGV2"/>
<dbReference type="GeneID" id="399355"/>
<dbReference type="KEGG" id="xla:399355"/>
<dbReference type="AGR" id="Xenbase:XB-GENE-6254033"/>
<dbReference type="CTD" id="399355"/>
<dbReference type="Xenbase" id="XB-GENE-6254033">
    <property type="gene designation" value="wee1.S"/>
</dbReference>
<dbReference type="OrthoDB" id="5337378at2759"/>
<dbReference type="Proteomes" id="UP000186698">
    <property type="component" value="Chromosome 4S"/>
</dbReference>
<dbReference type="Bgee" id="399355">
    <property type="expression patterns" value="Expressed in neurula embryo and 19 other cell types or tissues"/>
</dbReference>
<dbReference type="GO" id="GO:0005737">
    <property type="term" value="C:cytoplasm"/>
    <property type="evidence" value="ECO:0000318"/>
    <property type="project" value="GO_Central"/>
</dbReference>
<dbReference type="GO" id="GO:0005634">
    <property type="term" value="C:nucleus"/>
    <property type="evidence" value="ECO:0000318"/>
    <property type="project" value="GO_Central"/>
</dbReference>
<dbReference type="GO" id="GO:0005524">
    <property type="term" value="F:ATP binding"/>
    <property type="evidence" value="ECO:0007669"/>
    <property type="project" value="UniProtKB-KW"/>
</dbReference>
<dbReference type="GO" id="GO:0042802">
    <property type="term" value="F:identical protein binding"/>
    <property type="evidence" value="ECO:0000353"/>
    <property type="project" value="IntAct"/>
</dbReference>
<dbReference type="GO" id="GO:0000287">
    <property type="term" value="F:magnesium ion binding"/>
    <property type="evidence" value="ECO:0007669"/>
    <property type="project" value="InterPro"/>
</dbReference>
<dbReference type="GO" id="GO:0004715">
    <property type="term" value="F:non-membrane spanning protein tyrosine kinase activity"/>
    <property type="evidence" value="ECO:0007669"/>
    <property type="project" value="UniProtKB-EC"/>
</dbReference>
<dbReference type="GO" id="GO:0004713">
    <property type="term" value="F:protein tyrosine kinase activity"/>
    <property type="evidence" value="ECO:0000318"/>
    <property type="project" value="GO_Central"/>
</dbReference>
<dbReference type="GO" id="GO:0051301">
    <property type="term" value="P:cell division"/>
    <property type="evidence" value="ECO:0007669"/>
    <property type="project" value="UniProtKB-KW"/>
</dbReference>
<dbReference type="GO" id="GO:0000278">
    <property type="term" value="P:mitotic cell cycle"/>
    <property type="evidence" value="ECO:0007669"/>
    <property type="project" value="InterPro"/>
</dbReference>
<dbReference type="GO" id="GO:0045786">
    <property type="term" value="P:negative regulation of cell cycle"/>
    <property type="evidence" value="ECO:0000314"/>
    <property type="project" value="CACAO"/>
</dbReference>
<dbReference type="GO" id="GO:0010972">
    <property type="term" value="P:negative regulation of G2/M transition of mitotic cell cycle"/>
    <property type="evidence" value="ECO:0000318"/>
    <property type="project" value="GO_Central"/>
</dbReference>
<dbReference type="CDD" id="cd14138">
    <property type="entry name" value="PTKc_Wee1a"/>
    <property type="match status" value="1"/>
</dbReference>
<dbReference type="FunFam" id="3.30.200.20:FF:000115">
    <property type="entry name" value="Wee1-like kinase 2"/>
    <property type="match status" value="1"/>
</dbReference>
<dbReference type="FunFam" id="1.10.510.10:FF:000217">
    <property type="entry name" value="Wee1-like protein kinase"/>
    <property type="match status" value="1"/>
</dbReference>
<dbReference type="Gene3D" id="3.30.200.20">
    <property type="entry name" value="Phosphorylase Kinase, domain 1"/>
    <property type="match status" value="1"/>
</dbReference>
<dbReference type="Gene3D" id="1.10.510.10">
    <property type="entry name" value="Transferase(Phosphotransferase) domain 1"/>
    <property type="match status" value="1"/>
</dbReference>
<dbReference type="InterPro" id="IPR050339">
    <property type="entry name" value="CC_SR_Kinase"/>
</dbReference>
<dbReference type="InterPro" id="IPR011009">
    <property type="entry name" value="Kinase-like_dom_sf"/>
</dbReference>
<dbReference type="InterPro" id="IPR000719">
    <property type="entry name" value="Prot_kinase_dom"/>
</dbReference>
<dbReference type="InterPro" id="IPR017441">
    <property type="entry name" value="Protein_kinase_ATP_BS"/>
</dbReference>
<dbReference type="InterPro" id="IPR008271">
    <property type="entry name" value="Ser/Thr_kinase_AS"/>
</dbReference>
<dbReference type="InterPro" id="IPR017164">
    <property type="entry name" value="Wee1-like_protein_kinase"/>
</dbReference>
<dbReference type="PANTHER" id="PTHR11042">
    <property type="entry name" value="EUKARYOTIC TRANSLATION INITIATION FACTOR 2-ALPHA KINASE EIF2-ALPHA KINASE -RELATED"/>
    <property type="match status" value="1"/>
</dbReference>
<dbReference type="PANTHER" id="PTHR11042:SF72">
    <property type="entry name" value="WEE1-LIKE PROTEIN KINASE"/>
    <property type="match status" value="1"/>
</dbReference>
<dbReference type="Pfam" id="PF00069">
    <property type="entry name" value="Pkinase"/>
    <property type="match status" value="1"/>
</dbReference>
<dbReference type="PIRSF" id="PIRSF037281">
    <property type="entry name" value="Wee1-like_protein_kinase"/>
    <property type="match status" value="1"/>
</dbReference>
<dbReference type="SMART" id="SM00220">
    <property type="entry name" value="S_TKc"/>
    <property type="match status" value="1"/>
</dbReference>
<dbReference type="SUPFAM" id="SSF56112">
    <property type="entry name" value="Protein kinase-like (PK-like)"/>
    <property type="match status" value="1"/>
</dbReference>
<dbReference type="PROSITE" id="PS00107">
    <property type="entry name" value="PROTEIN_KINASE_ATP"/>
    <property type="match status" value="1"/>
</dbReference>
<dbReference type="PROSITE" id="PS50011">
    <property type="entry name" value="PROTEIN_KINASE_DOM"/>
    <property type="match status" value="1"/>
</dbReference>
<dbReference type="PROSITE" id="PS00108">
    <property type="entry name" value="PROTEIN_KINASE_ST"/>
    <property type="match status" value="1"/>
</dbReference>
<comment type="function">
    <text evidence="6">Acts as a zygotic negative regulator of entry into mitosis (G2 to M transition) by protecting the nucleus from cytoplasmically activated cyclin B1-complexed cdk1 before the onset of mitosis by mediating phosphorylation of cdk1 on 'Tyr-15'. Specifically phosphorylates and inactivates cyclin B1-complexed cdk1 reaching a maximum during G2 phase and a minimum as cells enter M phase. Phosphorylation of cyclin B1-cdk1 occurs exclusively on 'Tyr-15' and phosphorylation of monomeric cdk1 does not occur.</text>
</comment>
<comment type="catalytic activity">
    <reaction evidence="4">
        <text>L-tyrosyl-[protein] + ATP = O-phospho-L-tyrosyl-[protein] + ADP + H(+)</text>
        <dbReference type="Rhea" id="RHEA:10596"/>
        <dbReference type="Rhea" id="RHEA-COMP:10136"/>
        <dbReference type="Rhea" id="RHEA-COMP:20101"/>
        <dbReference type="ChEBI" id="CHEBI:15378"/>
        <dbReference type="ChEBI" id="CHEBI:30616"/>
        <dbReference type="ChEBI" id="CHEBI:46858"/>
        <dbReference type="ChEBI" id="CHEBI:61978"/>
        <dbReference type="ChEBI" id="CHEBI:456216"/>
        <dbReference type="EC" id="2.7.10.2"/>
    </reaction>
</comment>
<comment type="subunit">
    <text evidence="7">Interacts (when phosphorylated at Thr-186) with pin1.</text>
</comment>
<comment type="interaction">
    <interactant intactId="EBI-15625605">
        <id>Q8QGV2</id>
    </interactant>
    <interactant intactId="EBI-959114">
        <id>Q9I9K6</id>
        <label>pin1.L</label>
    </interactant>
    <organismsDiffer>false</organismsDiffer>
    <experiments>2</experiments>
</comment>
<comment type="interaction">
    <interactant intactId="EBI-15625605">
        <id>Q8QGV2</id>
    </interactant>
    <interactant intactId="EBI-15625605">
        <id>Q8QGV2</id>
        <label>wee1-b</label>
    </interactant>
    <organismsDiffer>false</organismsDiffer>
    <experiments>2</experiments>
</comment>
<comment type="subcellular location">
    <subcellularLocation>
        <location evidence="1">Nucleus</location>
    </subcellularLocation>
</comment>
<comment type="tissue specificity">
    <text evidence="6">Zygotically expressed. Present in oocytes and postgastrula embryos (at least until the tailbud stage). Expression begins at the midblastula stage and increases after the early gastrula stage.</text>
</comment>
<comment type="PTM">
    <text evidence="7">Phosphorylation at Thr-186 during M-phase by cdk1 inhibits the kinase activity and leads to interaction with pin1.</text>
</comment>
<comment type="similarity">
    <text evidence="3">Belongs to the protein kinase superfamily. Ser/Thr protein kinase family. WEE1 subfamily.</text>
</comment>
<comment type="sequence caution" evidence="8">
    <conflict type="erroneous initiation">
        <sequence resource="EMBL-CDS" id="AAH82404"/>
    </conflict>
    <text>Truncated N-terminus.</text>
</comment>
<proteinExistence type="evidence at protein level"/>
<keyword id="KW-0067">ATP-binding</keyword>
<keyword id="KW-0131">Cell cycle</keyword>
<keyword id="KW-0132">Cell division</keyword>
<keyword id="KW-0175">Coiled coil</keyword>
<keyword id="KW-0418">Kinase</keyword>
<keyword id="KW-0460">Magnesium</keyword>
<keyword id="KW-0479">Metal-binding</keyword>
<keyword id="KW-0498">Mitosis</keyword>
<keyword id="KW-0547">Nucleotide-binding</keyword>
<keyword id="KW-0539">Nucleus</keyword>
<keyword id="KW-0597">Phosphoprotein</keyword>
<keyword id="KW-1185">Reference proteome</keyword>
<keyword id="KW-0808">Transferase</keyword>
<keyword id="KW-0829">Tyrosine-protein kinase</keyword>
<reference key="1">
    <citation type="journal article" date="2002" name="EMBO J.">
        <title>The existence of two distinct Wee1 isoforms in Xenopus: implications for the developmental regulation of the cell cycle.</title>
        <authorList>
            <person name="Okamoto K."/>
            <person name="Nakajo N."/>
            <person name="Sagata N."/>
        </authorList>
    </citation>
    <scope>NUCLEOTIDE SEQUENCE [MRNA]</scope>
    <scope>FUNCTION</scope>
    <scope>TISSUE SPECIFICITY</scope>
</reference>
<reference key="2">
    <citation type="submission" date="2004-09" db="EMBL/GenBank/DDBJ databases">
        <authorList>
            <consortium name="NIH - Xenopus Gene Collection (XGC) project"/>
        </authorList>
    </citation>
    <scope>NUCLEOTIDE SEQUENCE [LARGE SCALE MRNA]</scope>
    <source>
        <tissue>Kidney</tissue>
    </source>
</reference>
<reference key="3">
    <citation type="journal article" date="2007" name="Proc. Natl. Acad. Sci. U.S.A.">
        <title>Mechanism for inactivation of the mitotic inhibitory kinase Wee1 at M phase.</title>
        <authorList>
            <person name="Okamoto K."/>
            <person name="Sagata N."/>
        </authorList>
    </citation>
    <scope>PHOSPHORYLATION AT THR-186</scope>
    <scope>INTERACTION WITH PIN1</scope>
    <scope>MUTAGENESIS OF 181-ASN--ASN-183 AND THR-186</scope>
</reference>
<accession>Q8QGV2</accession>
<accession>Q641D3</accession>